<organism>
    <name type="scientific">Synechocystis sp. (strain ATCC 27184 / PCC 6803 / Kazusa)</name>
    <dbReference type="NCBI Taxonomy" id="1111708"/>
    <lineage>
        <taxon>Bacteria</taxon>
        <taxon>Bacillati</taxon>
        <taxon>Cyanobacteriota</taxon>
        <taxon>Cyanophyceae</taxon>
        <taxon>Synechococcales</taxon>
        <taxon>Merismopediaceae</taxon>
        <taxon>Synechocystis</taxon>
    </lineage>
</organism>
<protein>
    <recommendedName>
        <fullName evidence="1">Elongation factor 4</fullName>
        <shortName evidence="1">EF-4</shortName>
        <ecNumber evidence="1">3.6.5.n1</ecNumber>
    </recommendedName>
    <alternativeName>
        <fullName evidence="1">Ribosomal back-translocase LepA</fullName>
    </alternativeName>
</protein>
<proteinExistence type="inferred from homology"/>
<sequence>MTDVPVSRIRNFSIIAHIDHGKSTLADRLLQVTDTVQQREMKEQFLDNMDLERERGITIKLQAARMNYKAKDGQDYVLNLIDTPGHVDFSYEVSRSLAACEGALLVVDASQGVEAQTLANVYLALDNNLEIIPVLNKIDLPSAEPDRVAAEIEEVVGLDCSDIIQASAKAGIGVDDILEAIVQQVPPPADTVDQPLRALIFDSYYDAYRGVVVYFRVMDGQVKKGDKVRLMASDKEYVIDELGVLSPTQVQVEALHAGEVGYFAAAIKAVADARVGDTITMANSPAAEPLPGYTEANPMVFCGLFPIDADQYPDLKDALEKLKLNDAALSYEPETSSAMGFGFRCGFLGLLHMEIVQERLEREYNLDLITTAPSVIYRVTTTDEEVIEVDNPSLLPPIQKRLKVEEPFIKVEMITPETYVGTLMELCQSRRGVFKDMKFFTQTRTALIYELPLAEVVTDFFDQLKSRTKGYASMEYQLIGYRENPLVKLDILVNGDGVDALAMIVHRDKAYYVGRAMVSKLKELIPRHQFKVPIQAAIGAKVIASEHIPALRKDVLAKCYGGDISRKKKLLQKQAKGKKRMKAIGTVDVPQEAFMAVLKLDPQ</sequence>
<dbReference type="EC" id="3.6.5.n1" evidence="1"/>
<dbReference type="EMBL" id="BA000022">
    <property type="protein sequence ID" value="BAA18871.1"/>
    <property type="molecule type" value="Genomic_DNA"/>
</dbReference>
<dbReference type="PIR" id="S76959">
    <property type="entry name" value="S76959"/>
</dbReference>
<dbReference type="SMR" id="P74751"/>
<dbReference type="FunCoup" id="P74751">
    <property type="interactions" value="442"/>
</dbReference>
<dbReference type="IntAct" id="P74751">
    <property type="interactions" value="3"/>
</dbReference>
<dbReference type="STRING" id="1148.gene:10500643"/>
<dbReference type="PaxDb" id="1148-1653961"/>
<dbReference type="EnsemblBacteria" id="BAA18871">
    <property type="protein sequence ID" value="BAA18871"/>
    <property type="gene ID" value="BAA18871"/>
</dbReference>
<dbReference type="KEGG" id="syn:slr0604"/>
<dbReference type="eggNOG" id="COG0481">
    <property type="taxonomic scope" value="Bacteria"/>
</dbReference>
<dbReference type="InParanoid" id="P74751"/>
<dbReference type="PhylomeDB" id="P74751"/>
<dbReference type="Proteomes" id="UP000001425">
    <property type="component" value="Chromosome"/>
</dbReference>
<dbReference type="GO" id="GO:0005886">
    <property type="term" value="C:plasma membrane"/>
    <property type="evidence" value="ECO:0007669"/>
    <property type="project" value="UniProtKB-SubCell"/>
</dbReference>
<dbReference type="GO" id="GO:0005525">
    <property type="term" value="F:GTP binding"/>
    <property type="evidence" value="ECO:0007669"/>
    <property type="project" value="UniProtKB-KW"/>
</dbReference>
<dbReference type="GO" id="GO:0003924">
    <property type="term" value="F:GTPase activity"/>
    <property type="evidence" value="ECO:0007669"/>
    <property type="project" value="InterPro"/>
</dbReference>
<dbReference type="GO" id="GO:0043022">
    <property type="term" value="F:ribosome binding"/>
    <property type="evidence" value="ECO:0000318"/>
    <property type="project" value="GO_Central"/>
</dbReference>
<dbReference type="GO" id="GO:0045727">
    <property type="term" value="P:positive regulation of translation"/>
    <property type="evidence" value="ECO:0000318"/>
    <property type="project" value="GO_Central"/>
</dbReference>
<dbReference type="GO" id="GO:0006412">
    <property type="term" value="P:translation"/>
    <property type="evidence" value="ECO:0007669"/>
    <property type="project" value="UniProtKB-KW"/>
</dbReference>
<dbReference type="CDD" id="cd03699">
    <property type="entry name" value="EF4_II"/>
    <property type="match status" value="1"/>
</dbReference>
<dbReference type="CDD" id="cd16260">
    <property type="entry name" value="EF4_III"/>
    <property type="match status" value="1"/>
</dbReference>
<dbReference type="CDD" id="cd01890">
    <property type="entry name" value="LepA"/>
    <property type="match status" value="1"/>
</dbReference>
<dbReference type="CDD" id="cd03709">
    <property type="entry name" value="lepA_C"/>
    <property type="match status" value="1"/>
</dbReference>
<dbReference type="FunFam" id="3.40.50.300:FF:000078">
    <property type="entry name" value="Elongation factor 4"/>
    <property type="match status" value="1"/>
</dbReference>
<dbReference type="FunFam" id="2.40.30.10:FF:000015">
    <property type="entry name" value="Translation factor GUF1, mitochondrial"/>
    <property type="match status" value="1"/>
</dbReference>
<dbReference type="FunFam" id="3.30.70.240:FF:000007">
    <property type="entry name" value="Translation factor GUF1, mitochondrial"/>
    <property type="match status" value="1"/>
</dbReference>
<dbReference type="FunFam" id="3.30.70.2570:FF:000001">
    <property type="entry name" value="Translation factor GUF1, mitochondrial"/>
    <property type="match status" value="1"/>
</dbReference>
<dbReference type="FunFam" id="3.30.70.870:FF:000004">
    <property type="entry name" value="Translation factor GUF1, mitochondrial"/>
    <property type="match status" value="1"/>
</dbReference>
<dbReference type="Gene3D" id="3.30.70.240">
    <property type="match status" value="1"/>
</dbReference>
<dbReference type="Gene3D" id="3.30.70.2570">
    <property type="entry name" value="Elongation factor 4, C-terminal domain"/>
    <property type="match status" value="1"/>
</dbReference>
<dbReference type="Gene3D" id="3.30.70.870">
    <property type="entry name" value="Elongation Factor G (Translational Gtpase), domain 3"/>
    <property type="match status" value="1"/>
</dbReference>
<dbReference type="Gene3D" id="3.40.50.300">
    <property type="entry name" value="P-loop containing nucleotide triphosphate hydrolases"/>
    <property type="match status" value="1"/>
</dbReference>
<dbReference type="Gene3D" id="2.40.30.10">
    <property type="entry name" value="Translation factors"/>
    <property type="match status" value="1"/>
</dbReference>
<dbReference type="HAMAP" id="MF_03138">
    <property type="entry name" value="GUFP"/>
    <property type="match status" value="1"/>
</dbReference>
<dbReference type="HAMAP" id="MF_00071">
    <property type="entry name" value="LepA"/>
    <property type="match status" value="1"/>
</dbReference>
<dbReference type="InterPro" id="IPR006297">
    <property type="entry name" value="EF-4"/>
</dbReference>
<dbReference type="InterPro" id="IPR035647">
    <property type="entry name" value="EFG_III/V"/>
</dbReference>
<dbReference type="InterPro" id="IPR000640">
    <property type="entry name" value="EFG_V-like"/>
</dbReference>
<dbReference type="InterPro" id="IPR004161">
    <property type="entry name" value="EFTu-like_2"/>
</dbReference>
<dbReference type="InterPro" id="IPR031157">
    <property type="entry name" value="G_TR_CS"/>
</dbReference>
<dbReference type="InterPro" id="IPR027518">
    <property type="entry name" value="GUFP"/>
</dbReference>
<dbReference type="InterPro" id="IPR038363">
    <property type="entry name" value="LepA_C_sf"/>
</dbReference>
<dbReference type="InterPro" id="IPR013842">
    <property type="entry name" value="LepA_CTD"/>
</dbReference>
<dbReference type="InterPro" id="IPR035654">
    <property type="entry name" value="LepA_IV"/>
</dbReference>
<dbReference type="InterPro" id="IPR027417">
    <property type="entry name" value="P-loop_NTPase"/>
</dbReference>
<dbReference type="InterPro" id="IPR005225">
    <property type="entry name" value="Small_GTP-bd"/>
</dbReference>
<dbReference type="InterPro" id="IPR000795">
    <property type="entry name" value="T_Tr_GTP-bd_dom"/>
</dbReference>
<dbReference type="NCBIfam" id="TIGR01393">
    <property type="entry name" value="lepA"/>
    <property type="match status" value="1"/>
</dbReference>
<dbReference type="NCBIfam" id="TIGR00231">
    <property type="entry name" value="small_GTP"/>
    <property type="match status" value="1"/>
</dbReference>
<dbReference type="PANTHER" id="PTHR43512:SF4">
    <property type="entry name" value="TRANSLATION FACTOR GUF1 HOMOLOG, CHLOROPLASTIC"/>
    <property type="match status" value="1"/>
</dbReference>
<dbReference type="PANTHER" id="PTHR43512">
    <property type="entry name" value="TRANSLATION FACTOR GUF1-RELATED"/>
    <property type="match status" value="1"/>
</dbReference>
<dbReference type="Pfam" id="PF00679">
    <property type="entry name" value="EFG_C"/>
    <property type="match status" value="1"/>
</dbReference>
<dbReference type="Pfam" id="PF00009">
    <property type="entry name" value="GTP_EFTU"/>
    <property type="match status" value="1"/>
</dbReference>
<dbReference type="Pfam" id="PF03144">
    <property type="entry name" value="GTP_EFTU_D2"/>
    <property type="match status" value="1"/>
</dbReference>
<dbReference type="Pfam" id="PF06421">
    <property type="entry name" value="LepA_C"/>
    <property type="match status" value="1"/>
</dbReference>
<dbReference type="PRINTS" id="PR00315">
    <property type="entry name" value="ELONGATNFCT"/>
</dbReference>
<dbReference type="SMART" id="SM00838">
    <property type="entry name" value="EFG_C"/>
    <property type="match status" value="1"/>
</dbReference>
<dbReference type="SUPFAM" id="SSF54980">
    <property type="entry name" value="EF-G C-terminal domain-like"/>
    <property type="match status" value="2"/>
</dbReference>
<dbReference type="SUPFAM" id="SSF52540">
    <property type="entry name" value="P-loop containing nucleoside triphosphate hydrolases"/>
    <property type="match status" value="1"/>
</dbReference>
<dbReference type="PROSITE" id="PS00301">
    <property type="entry name" value="G_TR_1"/>
    <property type="match status" value="1"/>
</dbReference>
<dbReference type="PROSITE" id="PS51722">
    <property type="entry name" value="G_TR_2"/>
    <property type="match status" value="1"/>
</dbReference>
<name>LEPA_SYNY3</name>
<comment type="function">
    <text evidence="1">Required for accurate and efficient protein synthesis under certain stress conditions. May act as a fidelity factor of the translation reaction, by catalyzing a one-codon backward translocation of tRNAs on improperly translocated ribosomes. Back-translocation proceeds from a post-translocation (POST) complex to a pre-translocation (PRE) complex, thus giving elongation factor G a second chance to translocate the tRNAs correctly. Binds to ribosomes in a GTP-dependent manner.</text>
</comment>
<comment type="catalytic activity">
    <reaction evidence="1">
        <text>GTP + H2O = GDP + phosphate + H(+)</text>
        <dbReference type="Rhea" id="RHEA:19669"/>
        <dbReference type="ChEBI" id="CHEBI:15377"/>
        <dbReference type="ChEBI" id="CHEBI:15378"/>
        <dbReference type="ChEBI" id="CHEBI:37565"/>
        <dbReference type="ChEBI" id="CHEBI:43474"/>
        <dbReference type="ChEBI" id="CHEBI:58189"/>
        <dbReference type="EC" id="3.6.5.n1"/>
    </reaction>
</comment>
<comment type="subcellular location">
    <subcellularLocation>
        <location evidence="1">Cell inner membrane</location>
        <topology evidence="1">Peripheral membrane protein</topology>
        <orientation evidence="1">Cytoplasmic side</orientation>
    </subcellularLocation>
</comment>
<comment type="similarity">
    <text evidence="1">Belongs to the TRAFAC class translation factor GTPase superfamily. Classic translation factor GTPase family. LepA subfamily.</text>
</comment>
<feature type="chain" id="PRO_0000176361" description="Elongation factor 4">
    <location>
        <begin position="1"/>
        <end position="603"/>
    </location>
</feature>
<feature type="domain" description="tr-type G">
    <location>
        <begin position="7"/>
        <end position="189"/>
    </location>
</feature>
<feature type="binding site" evidence="1">
    <location>
        <begin position="19"/>
        <end position="24"/>
    </location>
    <ligand>
        <name>GTP</name>
        <dbReference type="ChEBI" id="CHEBI:37565"/>
    </ligand>
</feature>
<feature type="binding site" evidence="1">
    <location>
        <begin position="136"/>
        <end position="139"/>
    </location>
    <ligand>
        <name>GTP</name>
        <dbReference type="ChEBI" id="CHEBI:37565"/>
    </ligand>
</feature>
<accession>P74751</accession>
<gene>
    <name evidence="1" type="primary">lepA</name>
    <name type="ordered locus">slr0604</name>
</gene>
<keyword id="KW-0997">Cell inner membrane</keyword>
<keyword id="KW-1003">Cell membrane</keyword>
<keyword id="KW-0342">GTP-binding</keyword>
<keyword id="KW-0378">Hydrolase</keyword>
<keyword id="KW-0472">Membrane</keyword>
<keyword id="KW-0547">Nucleotide-binding</keyword>
<keyword id="KW-0648">Protein biosynthesis</keyword>
<keyword id="KW-1185">Reference proteome</keyword>
<reference key="1">
    <citation type="journal article" date="1996" name="DNA Res.">
        <title>Sequence analysis of the genome of the unicellular cyanobacterium Synechocystis sp. strain PCC6803. II. Sequence determination of the entire genome and assignment of potential protein-coding regions.</title>
        <authorList>
            <person name="Kaneko T."/>
            <person name="Sato S."/>
            <person name="Kotani H."/>
            <person name="Tanaka A."/>
            <person name="Asamizu E."/>
            <person name="Nakamura Y."/>
            <person name="Miyajima N."/>
            <person name="Hirosawa M."/>
            <person name="Sugiura M."/>
            <person name="Sasamoto S."/>
            <person name="Kimura T."/>
            <person name="Hosouchi T."/>
            <person name="Matsuno A."/>
            <person name="Muraki A."/>
            <person name="Nakazaki N."/>
            <person name="Naruo K."/>
            <person name="Okumura S."/>
            <person name="Shimpo S."/>
            <person name="Takeuchi C."/>
            <person name="Wada T."/>
            <person name="Watanabe A."/>
            <person name="Yamada M."/>
            <person name="Yasuda M."/>
            <person name="Tabata S."/>
        </authorList>
    </citation>
    <scope>NUCLEOTIDE SEQUENCE [LARGE SCALE GENOMIC DNA]</scope>
    <source>
        <strain>ATCC 27184 / PCC 6803 / Kazusa</strain>
    </source>
</reference>
<evidence type="ECO:0000255" key="1">
    <source>
        <dbReference type="HAMAP-Rule" id="MF_00071"/>
    </source>
</evidence>